<name>GLO2_METS4</name>
<feature type="chain" id="PRO_1000184182" description="Hydroxyacylglutathione hydrolase">
    <location>
        <begin position="1"/>
        <end position="255"/>
    </location>
</feature>
<feature type="binding site" evidence="1">
    <location>
        <position position="55"/>
    </location>
    <ligand>
        <name>Zn(2+)</name>
        <dbReference type="ChEBI" id="CHEBI:29105"/>
        <label>1</label>
    </ligand>
</feature>
<feature type="binding site" evidence="1">
    <location>
        <position position="57"/>
    </location>
    <ligand>
        <name>Zn(2+)</name>
        <dbReference type="ChEBI" id="CHEBI:29105"/>
        <label>1</label>
    </ligand>
</feature>
<feature type="binding site" evidence="1">
    <location>
        <position position="59"/>
    </location>
    <ligand>
        <name>Zn(2+)</name>
        <dbReference type="ChEBI" id="CHEBI:29105"/>
        <label>2</label>
    </ligand>
</feature>
<feature type="binding site" evidence="1">
    <location>
        <position position="60"/>
    </location>
    <ligand>
        <name>Zn(2+)</name>
        <dbReference type="ChEBI" id="CHEBI:29105"/>
        <label>2</label>
    </ligand>
</feature>
<feature type="binding site" evidence="1">
    <location>
        <position position="113"/>
    </location>
    <ligand>
        <name>Zn(2+)</name>
        <dbReference type="ChEBI" id="CHEBI:29105"/>
        <label>1</label>
    </ligand>
</feature>
<feature type="binding site" evidence="1">
    <location>
        <position position="132"/>
    </location>
    <ligand>
        <name>Zn(2+)</name>
        <dbReference type="ChEBI" id="CHEBI:29105"/>
        <label>1</label>
    </ligand>
</feature>
<feature type="binding site" evidence="1">
    <location>
        <position position="132"/>
    </location>
    <ligand>
        <name>Zn(2+)</name>
        <dbReference type="ChEBI" id="CHEBI:29105"/>
        <label>2</label>
    </ligand>
</feature>
<feature type="binding site" evidence="1">
    <location>
        <position position="170"/>
    </location>
    <ligand>
        <name>Zn(2+)</name>
        <dbReference type="ChEBI" id="CHEBI:29105"/>
        <label>2</label>
    </ligand>
</feature>
<keyword id="KW-0378">Hydrolase</keyword>
<keyword id="KW-0479">Metal-binding</keyword>
<keyword id="KW-0862">Zinc</keyword>
<organism>
    <name type="scientific">Methylobacterium sp. (strain 4-46)</name>
    <dbReference type="NCBI Taxonomy" id="426117"/>
    <lineage>
        <taxon>Bacteria</taxon>
        <taxon>Pseudomonadati</taxon>
        <taxon>Pseudomonadota</taxon>
        <taxon>Alphaproteobacteria</taxon>
        <taxon>Hyphomicrobiales</taxon>
        <taxon>Methylobacteriaceae</taxon>
        <taxon>Methylobacterium</taxon>
    </lineage>
</organism>
<proteinExistence type="inferred from homology"/>
<accession>B0UBD0</accession>
<reference key="1">
    <citation type="submission" date="2008-02" db="EMBL/GenBank/DDBJ databases">
        <title>Complete sequence of chromosome of Methylobacterium sp. 4-46.</title>
        <authorList>
            <consortium name="US DOE Joint Genome Institute"/>
            <person name="Copeland A."/>
            <person name="Lucas S."/>
            <person name="Lapidus A."/>
            <person name="Glavina del Rio T."/>
            <person name="Dalin E."/>
            <person name="Tice H."/>
            <person name="Bruce D."/>
            <person name="Goodwin L."/>
            <person name="Pitluck S."/>
            <person name="Chertkov O."/>
            <person name="Brettin T."/>
            <person name="Detter J.C."/>
            <person name="Han C."/>
            <person name="Kuske C.R."/>
            <person name="Schmutz J."/>
            <person name="Larimer F."/>
            <person name="Land M."/>
            <person name="Hauser L."/>
            <person name="Kyrpides N."/>
            <person name="Ivanova N."/>
            <person name="Marx C.J."/>
            <person name="Richardson P."/>
        </authorList>
    </citation>
    <scope>NUCLEOTIDE SEQUENCE [LARGE SCALE GENOMIC DNA]</scope>
    <source>
        <strain>4-46</strain>
    </source>
</reference>
<gene>
    <name evidence="1" type="primary">gloB</name>
    <name type="ordered locus">M446_2063</name>
</gene>
<protein>
    <recommendedName>
        <fullName evidence="1">Hydroxyacylglutathione hydrolase</fullName>
        <ecNumber evidence="1">3.1.2.6</ecNumber>
    </recommendedName>
    <alternativeName>
        <fullName evidence="1">Glyoxalase II</fullName>
        <shortName evidence="1">Glx II</shortName>
    </alternativeName>
</protein>
<dbReference type="EC" id="3.1.2.6" evidence="1"/>
<dbReference type="EMBL" id="CP000943">
    <property type="protein sequence ID" value="ACA16526.1"/>
    <property type="molecule type" value="Genomic_DNA"/>
</dbReference>
<dbReference type="RefSeq" id="WP_012331935.1">
    <property type="nucleotide sequence ID" value="NC_010511.1"/>
</dbReference>
<dbReference type="SMR" id="B0UBD0"/>
<dbReference type="STRING" id="426117.M446_2063"/>
<dbReference type="KEGG" id="met:M446_2063"/>
<dbReference type="eggNOG" id="COG0491">
    <property type="taxonomic scope" value="Bacteria"/>
</dbReference>
<dbReference type="HOGENOM" id="CLU_030571_4_1_5"/>
<dbReference type="UniPathway" id="UPA00619">
    <property type="reaction ID" value="UER00676"/>
</dbReference>
<dbReference type="GO" id="GO:0004416">
    <property type="term" value="F:hydroxyacylglutathione hydrolase activity"/>
    <property type="evidence" value="ECO:0007669"/>
    <property type="project" value="UniProtKB-UniRule"/>
</dbReference>
<dbReference type="GO" id="GO:0046872">
    <property type="term" value="F:metal ion binding"/>
    <property type="evidence" value="ECO:0007669"/>
    <property type="project" value="UniProtKB-KW"/>
</dbReference>
<dbReference type="GO" id="GO:0019243">
    <property type="term" value="P:methylglyoxal catabolic process to D-lactate via S-lactoyl-glutathione"/>
    <property type="evidence" value="ECO:0007669"/>
    <property type="project" value="InterPro"/>
</dbReference>
<dbReference type="CDD" id="cd07723">
    <property type="entry name" value="hydroxyacylglutathione_hydrolase_MBL-fold"/>
    <property type="match status" value="1"/>
</dbReference>
<dbReference type="Gene3D" id="3.60.15.10">
    <property type="entry name" value="Ribonuclease Z/Hydroxyacylglutathione hydrolase-like"/>
    <property type="match status" value="1"/>
</dbReference>
<dbReference type="HAMAP" id="MF_01374">
    <property type="entry name" value="Glyoxalase_2"/>
    <property type="match status" value="1"/>
</dbReference>
<dbReference type="InterPro" id="IPR035680">
    <property type="entry name" value="Clx_II_MBL"/>
</dbReference>
<dbReference type="InterPro" id="IPR050110">
    <property type="entry name" value="Glyoxalase_II_hydrolase"/>
</dbReference>
<dbReference type="InterPro" id="IPR032282">
    <property type="entry name" value="HAGH_C"/>
</dbReference>
<dbReference type="InterPro" id="IPR017782">
    <property type="entry name" value="Hydroxyacylglutathione_Hdrlase"/>
</dbReference>
<dbReference type="InterPro" id="IPR001279">
    <property type="entry name" value="Metallo-B-lactamas"/>
</dbReference>
<dbReference type="InterPro" id="IPR036866">
    <property type="entry name" value="RibonucZ/Hydroxyglut_hydro"/>
</dbReference>
<dbReference type="NCBIfam" id="TIGR03413">
    <property type="entry name" value="GSH_gloB"/>
    <property type="match status" value="1"/>
</dbReference>
<dbReference type="PANTHER" id="PTHR43705">
    <property type="entry name" value="HYDROXYACYLGLUTATHIONE HYDROLASE"/>
    <property type="match status" value="1"/>
</dbReference>
<dbReference type="PANTHER" id="PTHR43705:SF1">
    <property type="entry name" value="HYDROXYACYLGLUTATHIONE HYDROLASE GLOB"/>
    <property type="match status" value="1"/>
</dbReference>
<dbReference type="Pfam" id="PF16123">
    <property type="entry name" value="HAGH_C"/>
    <property type="match status" value="1"/>
</dbReference>
<dbReference type="Pfam" id="PF00753">
    <property type="entry name" value="Lactamase_B"/>
    <property type="match status" value="1"/>
</dbReference>
<dbReference type="PIRSF" id="PIRSF005457">
    <property type="entry name" value="Glx"/>
    <property type="match status" value="1"/>
</dbReference>
<dbReference type="SMART" id="SM00849">
    <property type="entry name" value="Lactamase_B"/>
    <property type="match status" value="1"/>
</dbReference>
<dbReference type="SUPFAM" id="SSF56281">
    <property type="entry name" value="Metallo-hydrolase/oxidoreductase"/>
    <property type="match status" value="1"/>
</dbReference>
<sequence>MPEIRTFLCRSDNIGVLIRDPATGACAAIDVPEAGAVLRVLGETGWSLTDILVTHRHFDHVEGTPEVKARTGARVTAPAKAGDAVPEVDATVREGDAVRLGSLVAAVWETPGHCADHVTYWFERERIAFAGDTLFTLGCGRVMESPPEVLWRSLSRFLALPDETAIYSGHDYVLSNARFALAADPDNPNLKARAELAERVKRDGRFLIPTTLGEEKATNPFLRATEPALARAVGMAPGSDPAAVFTALREWKNRF</sequence>
<comment type="function">
    <text evidence="1">Thiolesterase that catalyzes the hydrolysis of S-D-lactoyl-glutathione to form glutathione and D-lactic acid.</text>
</comment>
<comment type="catalytic activity">
    <reaction evidence="1">
        <text>an S-(2-hydroxyacyl)glutathione + H2O = a 2-hydroxy carboxylate + glutathione + H(+)</text>
        <dbReference type="Rhea" id="RHEA:21864"/>
        <dbReference type="ChEBI" id="CHEBI:15377"/>
        <dbReference type="ChEBI" id="CHEBI:15378"/>
        <dbReference type="ChEBI" id="CHEBI:57925"/>
        <dbReference type="ChEBI" id="CHEBI:58896"/>
        <dbReference type="ChEBI" id="CHEBI:71261"/>
        <dbReference type="EC" id="3.1.2.6"/>
    </reaction>
</comment>
<comment type="cofactor">
    <cofactor evidence="1">
        <name>Zn(2+)</name>
        <dbReference type="ChEBI" id="CHEBI:29105"/>
    </cofactor>
    <text evidence="1">Binds 2 Zn(2+) ions per subunit.</text>
</comment>
<comment type="pathway">
    <text evidence="1">Secondary metabolite metabolism; methylglyoxal degradation; (R)-lactate from methylglyoxal: step 2/2.</text>
</comment>
<comment type="subunit">
    <text evidence="1">Monomer.</text>
</comment>
<comment type="similarity">
    <text evidence="1">Belongs to the metallo-beta-lactamase superfamily. Glyoxalase II family.</text>
</comment>
<evidence type="ECO:0000255" key="1">
    <source>
        <dbReference type="HAMAP-Rule" id="MF_01374"/>
    </source>
</evidence>